<comment type="function">
    <text evidence="2">A P subtype restriction enzyme that recognizes the double-stranded sequence 5'-CCWWGG-3' and cleaves after C-1.</text>
</comment>
<comment type="catalytic activity">
    <reaction>
        <text>Endonucleolytic cleavage of DNA to give specific double-stranded fragments with terminal 5'-phosphates.</text>
        <dbReference type="EC" id="3.1.21.4"/>
    </reaction>
</comment>
<comment type="disruption phenotype">
    <text evidence="1">Loss of restriction enzyme activity.</text>
</comment>
<dbReference type="EC" id="3.1.21.4"/>
<dbReference type="EMBL" id="X57945">
    <property type="protein sequence ID" value="CAA41013.1"/>
    <property type="molecule type" value="Genomic_DNA"/>
</dbReference>
<dbReference type="PIR" id="JN0746">
    <property type="entry name" value="JN0746"/>
</dbReference>
<dbReference type="PIR" id="S28523">
    <property type="entry name" value="S28523"/>
</dbReference>
<dbReference type="REBASE" id="2422">
    <property type="entry name" value="CfrBI"/>
</dbReference>
<dbReference type="BRENDA" id="3.1.21.4">
    <property type="organism ID" value="1398"/>
</dbReference>
<dbReference type="PRO" id="PR:Q04852"/>
<dbReference type="GO" id="GO:0009036">
    <property type="term" value="F:type II site-specific deoxyribonuclease activity"/>
    <property type="evidence" value="ECO:0007669"/>
    <property type="project" value="UniProtKB-EC"/>
</dbReference>
<dbReference type="GO" id="GO:0009307">
    <property type="term" value="P:DNA restriction-modification system"/>
    <property type="evidence" value="ECO:0007669"/>
    <property type="project" value="UniProtKB-KW"/>
</dbReference>
<dbReference type="InterPro" id="IPR019042">
    <property type="entry name" value="Restrct_endonuc_II_CfrBI"/>
</dbReference>
<dbReference type="Pfam" id="PF09516">
    <property type="entry name" value="RE_CfrBI"/>
    <property type="match status" value="1"/>
</dbReference>
<protein>
    <recommendedName>
        <fullName evidence="2">Type II restriction enzyme CfrBI</fullName>
        <shortName evidence="3">R.CfrBI</shortName>
        <ecNumber>3.1.21.4</ecNumber>
    </recommendedName>
    <alternativeName>
        <fullName>Endonuclease CfrBI</fullName>
    </alternativeName>
    <alternativeName>
        <fullName>Type-2 restriction enzyme CfrBI</fullName>
    </alternativeName>
</protein>
<accession>Q04852</accession>
<evidence type="ECO:0000269" key="1">
    <source>
    </source>
</evidence>
<evidence type="ECO:0000303" key="2">
    <source>
    </source>
</evidence>
<evidence type="ECO:0000303" key="3">
    <source>
    </source>
</evidence>
<organism>
    <name type="scientific">Citrobacter freundii</name>
    <dbReference type="NCBI Taxonomy" id="546"/>
    <lineage>
        <taxon>Bacteria</taxon>
        <taxon>Pseudomonadati</taxon>
        <taxon>Pseudomonadota</taxon>
        <taxon>Gammaproteobacteria</taxon>
        <taxon>Enterobacterales</taxon>
        <taxon>Enterobacteriaceae</taxon>
        <taxon>Citrobacter</taxon>
        <taxon>Citrobacter freundii complex</taxon>
    </lineage>
</organism>
<keyword id="KW-0255">Endonuclease</keyword>
<keyword id="KW-0378">Hydrolase</keyword>
<keyword id="KW-0540">Nuclease</keyword>
<keyword id="KW-0614">Plasmid</keyword>
<keyword id="KW-0680">Restriction system</keyword>
<name>T2C1_CITFR</name>
<feature type="chain" id="PRO_0000077296" description="Type II restriction enzyme CfrBI">
    <location>
        <begin position="1"/>
        <end position="355"/>
    </location>
</feature>
<geneLocation type="plasmid">
    <name>pZE8</name>
</geneLocation>
<proteinExistence type="predicted"/>
<reference key="1">
    <citation type="journal article" date="1993" name="Gene">
        <title>Cloning and sequences of the genes encoding the CfrBI restriction-modification system from Citrobacter freundii.</title>
        <authorList>
            <person name="Zakharova M.V."/>
            <person name="Kravetz A.N."/>
            <person name="Beletzkaja I.V."/>
            <person name="Repyk A.V."/>
            <person name="Solonin A.S."/>
        </authorList>
    </citation>
    <scope>NUCLEOTIDE SEQUENCE [GENOMIC DNA]</scope>
    <scope>DISRUPTION PHENOTYPE</scope>
    <source>
        <strain>4111</strain>
    </source>
</reference>
<reference key="2">
    <citation type="journal article" date="2003" name="Nucleic Acids Res.">
        <title>A nomenclature for restriction enzymes, DNA methyltransferases, homing endonucleases and their genes.</title>
        <authorList>
            <person name="Roberts R.J."/>
            <person name="Belfort M."/>
            <person name="Bestor T."/>
            <person name="Bhagwat A.S."/>
            <person name="Bickle T.A."/>
            <person name="Bitinaite J."/>
            <person name="Blumenthal R.M."/>
            <person name="Degtyarev S.K."/>
            <person name="Dryden D.T."/>
            <person name="Dybvig K."/>
            <person name="Firman K."/>
            <person name="Gromova E.S."/>
            <person name="Gumport R.I."/>
            <person name="Halford S.E."/>
            <person name="Hattman S."/>
            <person name="Heitman J."/>
            <person name="Hornby D.P."/>
            <person name="Janulaitis A."/>
            <person name="Jeltsch A."/>
            <person name="Josephsen J."/>
            <person name="Kiss A."/>
            <person name="Klaenhammer T.R."/>
            <person name="Kobayashi I."/>
            <person name="Kong H."/>
            <person name="Krueger D.H."/>
            <person name="Lacks S."/>
            <person name="Marinus M.G."/>
            <person name="Miyahara M."/>
            <person name="Morgan R.D."/>
            <person name="Murray N.E."/>
            <person name="Nagaraja V."/>
            <person name="Piekarowicz A."/>
            <person name="Pingoud A."/>
            <person name="Raleigh E."/>
            <person name="Rao D.N."/>
            <person name="Reich N."/>
            <person name="Repin V.E."/>
            <person name="Selker E.U."/>
            <person name="Shaw P.C."/>
            <person name="Stein D.C."/>
            <person name="Stoddard B.L."/>
            <person name="Szybalski W."/>
            <person name="Trautner T.A."/>
            <person name="Van Etten J.L."/>
            <person name="Vitor J.M."/>
            <person name="Wilson G.G."/>
            <person name="Xu S.Y."/>
        </authorList>
    </citation>
    <scope>NOMENCLATURE</scope>
    <scope>SUBTYPE</scope>
</reference>
<sequence>MNFKDKNCFPNELIALAKISKNDVLDKFGTDVFKKVVYDVLTGKNVREFTEILTRTRLLESNLSFFDFFVDKMKEGITPKQLYLYAKNALSNKSYVKSNQPVLEWMVMMTNKQTQNVLRDEHGDGFDRLALRTQEEILKIKNGYEDKIGEISIGGQKVSLEDFCYIILSLGSQTLTIRGSEKSLHGKYFEKLILGSLFTIMGFEYKEKIEEGLNAKCFTLSTRADDRESDATLVFNGKAIRVDIGFIGRGNTEISLDKVSRFRRMDDIGGVMHNISTMVIVDVIGDRSRIVNMAEEIDGKVVAMSDPYWVAKVSSYISSKLNVDDLLEDKPQLKDIQSFISDALENVDLEKYIKL</sequence>
<gene>
    <name evidence="3" type="primary">cfrBIR</name>
</gene>